<proteinExistence type="inferred from homology"/>
<reference key="1">
    <citation type="journal article" date="2002" name="Nat. Genet.">
        <title>Genome sequence of the endocellular obligate symbiont of tsetse flies, Wigglesworthia glossinidia.</title>
        <authorList>
            <person name="Akman L."/>
            <person name="Yamashita A."/>
            <person name="Watanabe H."/>
            <person name="Oshima K."/>
            <person name="Shiba T."/>
            <person name="Hattori M."/>
            <person name="Aksoy S."/>
        </authorList>
    </citation>
    <scope>NUCLEOTIDE SEQUENCE [LARGE SCALE GENOMIC DNA]</scope>
</reference>
<organism>
    <name type="scientific">Wigglesworthia glossinidia brevipalpis</name>
    <dbReference type="NCBI Taxonomy" id="36870"/>
    <lineage>
        <taxon>Bacteria</taxon>
        <taxon>Pseudomonadati</taxon>
        <taxon>Pseudomonadota</taxon>
        <taxon>Gammaproteobacteria</taxon>
        <taxon>Enterobacterales</taxon>
        <taxon>Erwiniaceae</taxon>
        <taxon>Wigglesworthia</taxon>
    </lineage>
</organism>
<gene>
    <name type="ordered locus">WIGBR2520</name>
</gene>
<protein>
    <recommendedName>
        <fullName evidence="1">UPF0434 protein WIGBR2520</fullName>
    </recommendedName>
</protein>
<evidence type="ECO:0000255" key="1">
    <source>
        <dbReference type="HAMAP-Rule" id="MF_01187"/>
    </source>
</evidence>
<name>Y252_WIGBR</name>
<accession>Q8D2V0</accession>
<feature type="chain" id="PRO_0000291184" description="UPF0434 protein WIGBR2520">
    <location>
        <begin position="1"/>
        <end position="56"/>
    </location>
</feature>
<keyword id="KW-1185">Reference proteome</keyword>
<comment type="similarity">
    <text evidence="1">Belongs to the UPF0434 family.</text>
</comment>
<sequence length="56" mass="6492">MDKKLLNIIACPICNKKLNFDLIRKELICEFDSVAFPIKDGIPILLRDSSYPIKKR</sequence>
<dbReference type="EMBL" id="BA000021">
    <property type="protein sequence ID" value="BAC24398.1"/>
    <property type="molecule type" value="Genomic_DNA"/>
</dbReference>
<dbReference type="SMR" id="Q8D2V0"/>
<dbReference type="STRING" id="36870.gene:10368745"/>
<dbReference type="KEGG" id="wbr:ycaR"/>
<dbReference type="eggNOG" id="COG2835">
    <property type="taxonomic scope" value="Bacteria"/>
</dbReference>
<dbReference type="HOGENOM" id="CLU_155659_3_1_6"/>
<dbReference type="OrthoDB" id="9812205at2"/>
<dbReference type="Proteomes" id="UP000000562">
    <property type="component" value="Chromosome"/>
</dbReference>
<dbReference type="GO" id="GO:0005829">
    <property type="term" value="C:cytosol"/>
    <property type="evidence" value="ECO:0007669"/>
    <property type="project" value="TreeGrafter"/>
</dbReference>
<dbReference type="Gene3D" id="2.20.25.10">
    <property type="match status" value="1"/>
</dbReference>
<dbReference type="HAMAP" id="MF_01187">
    <property type="entry name" value="UPF0434"/>
    <property type="match status" value="1"/>
</dbReference>
<dbReference type="InterPro" id="IPR005651">
    <property type="entry name" value="Trm112-like"/>
</dbReference>
<dbReference type="PANTHER" id="PTHR33505:SF4">
    <property type="entry name" value="PROTEIN PREY, MITOCHONDRIAL"/>
    <property type="match status" value="1"/>
</dbReference>
<dbReference type="PANTHER" id="PTHR33505">
    <property type="entry name" value="ZGC:162634"/>
    <property type="match status" value="1"/>
</dbReference>
<dbReference type="Pfam" id="PF03966">
    <property type="entry name" value="Trm112p"/>
    <property type="match status" value="1"/>
</dbReference>
<dbReference type="SUPFAM" id="SSF158997">
    <property type="entry name" value="Trm112p-like"/>
    <property type="match status" value="1"/>
</dbReference>